<comment type="subcellular location">
    <subcellularLocation>
        <location evidence="1">Periplasm</location>
    </subcellularLocation>
</comment>
<comment type="similarity">
    <text evidence="1">Belongs to the UPF0194 family.</text>
</comment>
<organism>
    <name type="scientific">Escherichia coli O139:H28 (strain E24377A / ETEC)</name>
    <dbReference type="NCBI Taxonomy" id="331111"/>
    <lineage>
        <taxon>Bacteria</taxon>
        <taxon>Pseudomonadati</taxon>
        <taxon>Pseudomonadota</taxon>
        <taxon>Gammaproteobacteria</taxon>
        <taxon>Enterobacterales</taxon>
        <taxon>Enterobacteriaceae</taxon>
        <taxon>Escherichia</taxon>
    </lineage>
</organism>
<dbReference type="EMBL" id="CP000800">
    <property type="protein sequence ID" value="ABV20821.1"/>
    <property type="molecule type" value="Genomic_DNA"/>
</dbReference>
<dbReference type="SMR" id="A7ZJK6"/>
<dbReference type="KEGG" id="ecw:EcE24377A_0860"/>
<dbReference type="HOGENOM" id="CLU_018816_6_3_6"/>
<dbReference type="Proteomes" id="UP000001122">
    <property type="component" value="Chromosome"/>
</dbReference>
<dbReference type="GO" id="GO:0042597">
    <property type="term" value="C:periplasmic space"/>
    <property type="evidence" value="ECO:0007669"/>
    <property type="project" value="UniProtKB-SubCell"/>
</dbReference>
<dbReference type="FunFam" id="1.10.287.470:FF:000004">
    <property type="entry name" value="UPF0194 membrane protein YbhG"/>
    <property type="match status" value="1"/>
</dbReference>
<dbReference type="FunFam" id="2.40.30.170:FF:000005">
    <property type="entry name" value="UPF0194 membrane protein YbhG"/>
    <property type="match status" value="1"/>
</dbReference>
<dbReference type="FunFam" id="2.40.50.100:FF:000025">
    <property type="entry name" value="UPF0194 membrane protein YbhG"/>
    <property type="match status" value="1"/>
</dbReference>
<dbReference type="Gene3D" id="2.40.30.170">
    <property type="match status" value="1"/>
</dbReference>
<dbReference type="Gene3D" id="2.40.50.100">
    <property type="match status" value="2"/>
</dbReference>
<dbReference type="Gene3D" id="1.10.287.470">
    <property type="entry name" value="Helix hairpin bin"/>
    <property type="match status" value="2"/>
</dbReference>
<dbReference type="HAMAP" id="MF_01304">
    <property type="entry name" value="UPF0194"/>
    <property type="match status" value="1"/>
</dbReference>
<dbReference type="InterPro" id="IPR032317">
    <property type="entry name" value="CusB_D23"/>
</dbReference>
<dbReference type="InterPro" id="IPR022936">
    <property type="entry name" value="UPF0194_membrane_YbhG"/>
</dbReference>
<dbReference type="InterPro" id="IPR050465">
    <property type="entry name" value="UPF0194_transport"/>
</dbReference>
<dbReference type="NCBIfam" id="NF002939">
    <property type="entry name" value="PRK03598.1"/>
    <property type="match status" value="1"/>
</dbReference>
<dbReference type="PANTHER" id="PTHR32347">
    <property type="entry name" value="EFFLUX SYSTEM COMPONENT YKNX-RELATED"/>
    <property type="match status" value="1"/>
</dbReference>
<dbReference type="PANTHER" id="PTHR32347:SF29">
    <property type="entry name" value="UPF0194 MEMBRANE PROTEIN YBHG"/>
    <property type="match status" value="1"/>
</dbReference>
<dbReference type="Pfam" id="PF16576">
    <property type="entry name" value="HlyD_D23"/>
    <property type="match status" value="1"/>
</dbReference>
<dbReference type="SUPFAM" id="SSF111369">
    <property type="entry name" value="HlyD-like secretion proteins"/>
    <property type="match status" value="3"/>
</dbReference>
<reference key="1">
    <citation type="journal article" date="2008" name="J. Bacteriol.">
        <title>The pangenome structure of Escherichia coli: comparative genomic analysis of E. coli commensal and pathogenic isolates.</title>
        <authorList>
            <person name="Rasko D.A."/>
            <person name="Rosovitz M.J."/>
            <person name="Myers G.S.A."/>
            <person name="Mongodin E.F."/>
            <person name="Fricke W.F."/>
            <person name="Gajer P."/>
            <person name="Crabtree J."/>
            <person name="Sebaihia M."/>
            <person name="Thomson N.R."/>
            <person name="Chaudhuri R."/>
            <person name="Henderson I.R."/>
            <person name="Sperandio V."/>
            <person name="Ravel J."/>
        </authorList>
    </citation>
    <scope>NUCLEOTIDE SEQUENCE [LARGE SCALE GENOMIC DNA]</scope>
    <source>
        <strain>E24377A / ETEC</strain>
    </source>
</reference>
<name>YBHG_ECO24</name>
<protein>
    <recommendedName>
        <fullName evidence="1">UPF0194 membrane protein YbhG</fullName>
    </recommendedName>
</protein>
<proteinExistence type="inferred from homology"/>
<keyword id="KW-0175">Coiled coil</keyword>
<keyword id="KW-0574">Periplasm</keyword>
<keyword id="KW-1185">Reference proteome</keyword>
<keyword id="KW-0732">Signal</keyword>
<evidence type="ECO:0000255" key="1">
    <source>
        <dbReference type="HAMAP-Rule" id="MF_01304"/>
    </source>
</evidence>
<feature type="signal peptide" evidence="1">
    <location>
        <begin position="1"/>
        <end position="15"/>
    </location>
</feature>
<feature type="chain" id="PRO_0000322047" description="UPF0194 membrane protein YbhG">
    <location>
        <begin position="16"/>
        <end position="331"/>
    </location>
</feature>
<feature type="coiled-coil region" evidence="1">
    <location>
        <begin position="107"/>
        <end position="208"/>
    </location>
</feature>
<accession>A7ZJK6</accession>
<gene>
    <name evidence="1" type="primary">ybhG</name>
    <name type="ordered locus">EcE24377A_0860</name>
</gene>
<sequence>MKKPVVIGLAVVVLAAVVAGGYWWYQSRQDNGLTLYGNVDIRTVNLSFRVGGRVESLAVDEGDAIKAGQVLGELDHKPYEIALMQAKAGVSVAQAQYDLMLAGYRDEEIAQAAAAVKQAQAAYDYAQNFYNRQQGLWKSRTISANDLENARSSRDQAQATLKSAQDKLRQYRSGNREQDIAQAKASLEQAQAQLAQAELNLQDSTLIAPSDGTLLTRAVEPGTVLNEGGTVFTVSLTRPVWVRAYVDERNLDQAQPGRKVLLYTDGRPDKPYHGQIGFVSPTAEFTPKTVETPDLRTDLVYRLRIVVTDADDALRQGMPVTVQFGNEAGHE</sequence>